<reference key="1">
    <citation type="journal article" date="2003" name="Proc. Natl. Acad. Sci. U.S.A.">
        <title>The complete genome sequence of Mycobacterium bovis.</title>
        <authorList>
            <person name="Garnier T."/>
            <person name="Eiglmeier K."/>
            <person name="Camus J.-C."/>
            <person name="Medina N."/>
            <person name="Mansoor H."/>
            <person name="Pryor M."/>
            <person name="Duthoy S."/>
            <person name="Grondin S."/>
            <person name="Lacroix C."/>
            <person name="Monsempe C."/>
            <person name="Simon S."/>
            <person name="Harris B."/>
            <person name="Atkin R."/>
            <person name="Doggett J."/>
            <person name="Mayes R."/>
            <person name="Keating L."/>
            <person name="Wheeler P.R."/>
            <person name="Parkhill J."/>
            <person name="Barrell B.G."/>
            <person name="Cole S.T."/>
            <person name="Gordon S.V."/>
            <person name="Hewinson R.G."/>
        </authorList>
    </citation>
    <scope>NUCLEOTIDE SEQUENCE [LARGE SCALE GENOMIC DNA]</scope>
    <source>
        <strain>ATCC BAA-935 / AF2122/97</strain>
    </source>
</reference>
<reference key="2">
    <citation type="journal article" date="2017" name="Genome Announc.">
        <title>Updated reference genome sequence and annotation of Mycobacterium bovis AF2122/97.</title>
        <authorList>
            <person name="Malone K.M."/>
            <person name="Farrell D."/>
            <person name="Stuber T.P."/>
            <person name="Schubert O.T."/>
            <person name="Aebersold R."/>
            <person name="Robbe-Austerman S."/>
            <person name="Gordon S.V."/>
        </authorList>
    </citation>
    <scope>NUCLEOTIDE SEQUENCE [LARGE SCALE GENOMIC DNA]</scope>
    <scope>GENOME REANNOTATION</scope>
    <source>
        <strain>ATCC BAA-935 / AF2122/97</strain>
    </source>
</reference>
<keyword id="KW-1185">Reference proteome</keyword>
<dbReference type="EMBL" id="LT708304">
    <property type="protein sequence ID" value="SIT99116.1"/>
    <property type="molecule type" value="Genomic_DNA"/>
</dbReference>
<dbReference type="RefSeq" id="NP_854183.1">
    <property type="nucleotide sequence ID" value="NC_002945.3"/>
</dbReference>
<dbReference type="RefSeq" id="WP_003402695.1">
    <property type="nucleotide sequence ID" value="NC_002945.4"/>
</dbReference>
<dbReference type="SMR" id="P64728"/>
<dbReference type="PATRIC" id="fig|233413.5.peg.567"/>
<dbReference type="Proteomes" id="UP000001419">
    <property type="component" value="Chromosome"/>
</dbReference>
<dbReference type="Gene3D" id="3.40.30.10">
    <property type="entry name" value="Glutaredoxin"/>
    <property type="match status" value="1"/>
</dbReference>
<dbReference type="InterPro" id="IPR008554">
    <property type="entry name" value="Glutaredoxin-like"/>
</dbReference>
<dbReference type="InterPro" id="IPR036249">
    <property type="entry name" value="Thioredoxin-like_sf"/>
</dbReference>
<dbReference type="Pfam" id="PF05768">
    <property type="entry name" value="Glrx-like"/>
    <property type="match status" value="1"/>
</dbReference>
<dbReference type="SUPFAM" id="SSF52833">
    <property type="entry name" value="Thioredoxin-like"/>
    <property type="match status" value="1"/>
</dbReference>
<organism>
    <name type="scientific">Mycobacterium bovis (strain ATCC BAA-935 / AF2122/97)</name>
    <dbReference type="NCBI Taxonomy" id="233413"/>
    <lineage>
        <taxon>Bacteria</taxon>
        <taxon>Bacillati</taxon>
        <taxon>Actinomycetota</taxon>
        <taxon>Actinomycetes</taxon>
        <taxon>Mycobacteriales</taxon>
        <taxon>Mycobacteriaceae</taxon>
        <taxon>Mycobacterium</taxon>
        <taxon>Mycobacterium tuberculosis complex</taxon>
    </lineage>
</organism>
<proteinExistence type="predicted"/>
<protein>
    <recommendedName>
        <fullName>Uncharacterized protein Mb0520</fullName>
    </recommendedName>
</protein>
<accession>P64728</accession>
<accession>A0A1R3XVJ7</accession>
<accession>Q11172</accession>
<accession>X2BFA6</accession>
<gene>
    <name type="ordered locus">BQ2027_MB0520</name>
</gene>
<feature type="chain" id="PRO_0000103713" description="Uncharacterized protein Mb0520">
    <location>
        <begin position="1"/>
        <end position="97"/>
    </location>
</feature>
<name>Y520_MYCBO</name>
<sequence>MSRPQVELLTRAGCAICVRVAEQLAELSSELGFDMMTIDVDVAASTGNPGLRAEFGDRLPVVLLDGREHSYWEVDEHRLRADIARSTFGSPPDKRLP</sequence>